<accession>Q9C0D2</accession>
<accession>C9J5H9</accession>
<accession>C9JQY8</accession>
<accession>Q8N7L4</accession>
<accession>Q8N919</accession>
<accession>Q8N9B0</accession>
<accession>Q96LT8</accession>
<protein>
    <recommendedName>
        <fullName evidence="10">Centrosomal protein of 295 kDa</fullName>
    </recommendedName>
</protein>
<dbReference type="EMBL" id="AB051518">
    <property type="protein sequence ID" value="BAB21822.2"/>
    <property type="status" value="ALT_SEQ"/>
    <property type="molecule type" value="mRNA"/>
</dbReference>
<dbReference type="EMBL" id="AK057804">
    <property type="protein sequence ID" value="BAB71582.1"/>
    <property type="status" value="ALT_INIT"/>
    <property type="molecule type" value="mRNA"/>
</dbReference>
<dbReference type="EMBL" id="AK095218">
    <property type="protein sequence ID" value="BAC04502.1"/>
    <property type="molecule type" value="mRNA"/>
</dbReference>
<dbReference type="EMBL" id="AK095859">
    <property type="protein sequence ID" value="BAC04638.1"/>
    <property type="status" value="ALT_INIT"/>
    <property type="molecule type" value="mRNA"/>
</dbReference>
<dbReference type="EMBL" id="AK098232">
    <property type="protein sequence ID" value="BAC05264.1"/>
    <property type="molecule type" value="mRNA"/>
</dbReference>
<dbReference type="EMBL" id="AP001273">
    <property type="status" value="NOT_ANNOTATED_CDS"/>
    <property type="molecule type" value="Genomic_DNA"/>
</dbReference>
<dbReference type="EMBL" id="AP003499">
    <property type="status" value="NOT_ANNOTATED_CDS"/>
    <property type="molecule type" value="Genomic_DNA"/>
</dbReference>
<dbReference type="CCDS" id="CCDS44708.1">
    <molecule id="Q9C0D2-1"/>
</dbReference>
<dbReference type="RefSeq" id="NP_203753.1">
    <molecule id="Q9C0D2-1"/>
    <property type="nucleotide sequence ID" value="NM_033395.2"/>
</dbReference>
<dbReference type="SMR" id="Q9C0D2"/>
<dbReference type="BioGRID" id="124543">
    <property type="interactions" value="76"/>
</dbReference>
<dbReference type="FunCoup" id="Q9C0D2">
    <property type="interactions" value="1388"/>
</dbReference>
<dbReference type="IntAct" id="Q9C0D2">
    <property type="interactions" value="37"/>
</dbReference>
<dbReference type="STRING" id="9606.ENSP00000316681"/>
<dbReference type="CarbonylDB" id="Q9C0D2"/>
<dbReference type="GlyCosmos" id="Q9C0D2">
    <property type="glycosylation" value="2 sites, 2 glycans"/>
</dbReference>
<dbReference type="GlyGen" id="Q9C0D2">
    <property type="glycosylation" value="8 sites, 1 N-linked glycan (1 site), 3 O-linked glycans (7 sites)"/>
</dbReference>
<dbReference type="iPTMnet" id="Q9C0D2"/>
<dbReference type="PhosphoSitePlus" id="Q9C0D2"/>
<dbReference type="BioMuta" id="CEP295"/>
<dbReference type="DMDM" id="296439480"/>
<dbReference type="jPOST" id="Q9C0D2"/>
<dbReference type="MassIVE" id="Q9C0D2"/>
<dbReference type="PaxDb" id="9606-ENSP00000316681"/>
<dbReference type="PeptideAtlas" id="Q9C0D2"/>
<dbReference type="ProteomicsDB" id="80007">
    <molecule id="Q9C0D2-1"/>
</dbReference>
<dbReference type="ProteomicsDB" id="80008">
    <molecule id="Q9C0D2-2"/>
</dbReference>
<dbReference type="ProteomicsDB" id="80009">
    <molecule id="Q9C0D2-3"/>
</dbReference>
<dbReference type="ProteomicsDB" id="80010">
    <molecule id="Q9C0D2-4"/>
</dbReference>
<dbReference type="Pumba" id="Q9C0D2"/>
<dbReference type="Antibodypedia" id="50774">
    <property type="antibodies" value="17 antibodies from 7 providers"/>
</dbReference>
<dbReference type="Ensembl" id="ENST00000325212.11">
    <molecule id="Q9C0D2-1"/>
    <property type="protein sequence ID" value="ENSP00000316681.6"/>
    <property type="gene ID" value="ENSG00000166004.15"/>
</dbReference>
<dbReference type="Ensembl" id="ENST00000531700.5">
    <molecule id="Q9C0D2-2"/>
    <property type="protein sequence ID" value="ENSP00000437323.1"/>
    <property type="gene ID" value="ENSG00000166004.15"/>
</dbReference>
<dbReference type="GeneID" id="85459"/>
<dbReference type="KEGG" id="hsa:85459"/>
<dbReference type="MANE-Select" id="ENST00000325212.11">
    <property type="protein sequence ID" value="ENSP00000316681.6"/>
    <property type="RefSeq nucleotide sequence ID" value="NM_033395.2"/>
    <property type="RefSeq protein sequence ID" value="NP_203753.1"/>
</dbReference>
<dbReference type="UCSC" id="uc001pdu.1">
    <molecule id="Q9C0D2-1"/>
    <property type="organism name" value="human"/>
</dbReference>
<dbReference type="AGR" id="HGNC:29366"/>
<dbReference type="CTD" id="85459"/>
<dbReference type="DisGeNET" id="85459"/>
<dbReference type="GeneCards" id="CEP295"/>
<dbReference type="HGNC" id="HGNC:29366">
    <property type="gene designation" value="CEP295"/>
</dbReference>
<dbReference type="HPA" id="ENSG00000166004">
    <property type="expression patterns" value="Low tissue specificity"/>
</dbReference>
<dbReference type="MalaCards" id="CEP295"/>
<dbReference type="MIM" id="617728">
    <property type="type" value="gene"/>
</dbReference>
<dbReference type="MIM" id="620767">
    <property type="type" value="phenotype"/>
</dbReference>
<dbReference type="neXtProt" id="NX_Q9C0D2"/>
<dbReference type="OpenTargets" id="ENSG00000166004"/>
<dbReference type="PharmGKB" id="PA142671597"/>
<dbReference type="VEuPathDB" id="HostDB:ENSG00000166004"/>
<dbReference type="eggNOG" id="ENOG502QSZR">
    <property type="taxonomic scope" value="Eukaryota"/>
</dbReference>
<dbReference type="GeneTree" id="ENSGT00940000153123"/>
<dbReference type="HOGENOM" id="CLU_001093_0_0_1"/>
<dbReference type="InParanoid" id="Q9C0D2"/>
<dbReference type="OMA" id="RNMGEGH"/>
<dbReference type="OrthoDB" id="6359887at2759"/>
<dbReference type="PAN-GO" id="Q9C0D2">
    <property type="GO annotations" value="5 GO annotations based on evolutionary models"/>
</dbReference>
<dbReference type="PhylomeDB" id="Q9C0D2"/>
<dbReference type="TreeFam" id="TF331536"/>
<dbReference type="PathwayCommons" id="Q9C0D2"/>
<dbReference type="SignaLink" id="Q9C0D2"/>
<dbReference type="BioGRID-ORCS" id="85459">
    <property type="hits" value="84 hits in 1156 CRISPR screens"/>
</dbReference>
<dbReference type="CD-CODE" id="8C2F96ED">
    <property type="entry name" value="Centrosome"/>
</dbReference>
<dbReference type="ChiTaRS" id="CEP295">
    <property type="organism name" value="human"/>
</dbReference>
<dbReference type="GenomeRNAi" id="85459"/>
<dbReference type="Pharos" id="Q9C0D2">
    <property type="development level" value="Tbio"/>
</dbReference>
<dbReference type="PRO" id="PR:Q9C0D2"/>
<dbReference type="Proteomes" id="UP000005640">
    <property type="component" value="Chromosome 11"/>
</dbReference>
<dbReference type="RNAct" id="Q9C0D2">
    <property type="molecule type" value="protein"/>
</dbReference>
<dbReference type="Bgee" id="ENSG00000166004">
    <property type="expression patterns" value="Expressed in oocyte and 186 other cell types or tissues"/>
</dbReference>
<dbReference type="ExpressionAtlas" id="Q9C0D2">
    <property type="expression patterns" value="baseline and differential"/>
</dbReference>
<dbReference type="GO" id="GO:0005814">
    <property type="term" value="C:centriole"/>
    <property type="evidence" value="ECO:0000314"/>
    <property type="project" value="UniProtKB"/>
</dbReference>
<dbReference type="GO" id="GO:0005813">
    <property type="term" value="C:centrosome"/>
    <property type="evidence" value="ECO:0000314"/>
    <property type="project" value="UniProtKB"/>
</dbReference>
<dbReference type="GO" id="GO:0005737">
    <property type="term" value="C:cytoplasm"/>
    <property type="evidence" value="ECO:0000314"/>
    <property type="project" value="UniProtKB"/>
</dbReference>
<dbReference type="GO" id="GO:0005856">
    <property type="term" value="C:cytoskeleton"/>
    <property type="evidence" value="ECO:0000314"/>
    <property type="project" value="UniProtKB"/>
</dbReference>
<dbReference type="GO" id="GO:0005829">
    <property type="term" value="C:cytosol"/>
    <property type="evidence" value="ECO:0000318"/>
    <property type="project" value="GO_Central"/>
</dbReference>
<dbReference type="GO" id="GO:1990498">
    <property type="term" value="C:mitotic spindle microtubule"/>
    <property type="evidence" value="ECO:0000314"/>
    <property type="project" value="UniProtKB"/>
</dbReference>
<dbReference type="GO" id="GO:0008017">
    <property type="term" value="F:microtubule binding"/>
    <property type="evidence" value="ECO:0000314"/>
    <property type="project" value="UniProtKB"/>
</dbReference>
<dbReference type="GO" id="GO:0030030">
    <property type="term" value="P:cell projection organization"/>
    <property type="evidence" value="ECO:0007669"/>
    <property type="project" value="UniProtKB-KW"/>
</dbReference>
<dbReference type="GO" id="GO:0007099">
    <property type="term" value="P:centriole replication"/>
    <property type="evidence" value="ECO:0000314"/>
    <property type="project" value="UniProtKB"/>
</dbReference>
<dbReference type="GO" id="GO:1903724">
    <property type="term" value="P:positive regulation of centriole elongation"/>
    <property type="evidence" value="ECO:0000315"/>
    <property type="project" value="UniProtKB"/>
</dbReference>
<dbReference type="GO" id="GO:0010825">
    <property type="term" value="P:positive regulation of centrosome duplication"/>
    <property type="evidence" value="ECO:0000314"/>
    <property type="project" value="UniProtKB"/>
</dbReference>
<dbReference type="GO" id="GO:1904951">
    <property type="term" value="P:positive regulation of establishment of protein localization"/>
    <property type="evidence" value="ECO:0000315"/>
    <property type="project" value="UniProtKB"/>
</dbReference>
<dbReference type="GO" id="GO:1901985">
    <property type="term" value="P:positive regulation of protein acetylation"/>
    <property type="evidence" value="ECO:0000315"/>
    <property type="project" value="UniProtKB"/>
</dbReference>
<dbReference type="GO" id="GO:0046599">
    <property type="term" value="P:regulation of centriole replication"/>
    <property type="evidence" value="ECO:0000318"/>
    <property type="project" value="GO_Central"/>
</dbReference>
<dbReference type="InterPro" id="IPR029299">
    <property type="entry name" value="ALMS_motif"/>
</dbReference>
<dbReference type="PANTHER" id="PTHR21553">
    <property type="entry name" value="ALMS1-RELATED"/>
    <property type="match status" value="1"/>
</dbReference>
<dbReference type="PANTHER" id="PTHR21553:SF25">
    <property type="entry name" value="CENTROSOMAL PROTEIN OF 295 KDA"/>
    <property type="match status" value="1"/>
</dbReference>
<dbReference type="Pfam" id="PF15309">
    <property type="entry name" value="ALMS_motif"/>
    <property type="match status" value="1"/>
</dbReference>
<reference key="1">
    <citation type="journal article" date="2000" name="DNA Res.">
        <title>Prediction of the coding sequences of unidentified human genes. XIX. The complete sequences of 100 new cDNA clones from brain which code for large proteins in vitro.</title>
        <authorList>
            <person name="Nagase T."/>
            <person name="Kikuno R."/>
            <person name="Hattori A."/>
            <person name="Kondo Y."/>
            <person name="Okumura K."/>
            <person name="Ohara O."/>
        </authorList>
    </citation>
    <scope>NUCLEOTIDE SEQUENCE [LARGE SCALE MRNA] (ISOFORM 1)</scope>
    <scope>VARIANTS GLN-208 AND GLU-499</scope>
    <source>
        <tissue>Brain</tissue>
    </source>
</reference>
<reference key="2">
    <citation type="journal article" date="2002" name="DNA Res.">
        <title>Construction of expression-ready cDNA clones for KIAA genes: manual curation of 330 KIAA cDNA clones.</title>
        <authorList>
            <person name="Nakajima D."/>
            <person name="Okazaki N."/>
            <person name="Yamakawa H."/>
            <person name="Kikuno R."/>
            <person name="Ohara O."/>
            <person name="Nagase T."/>
        </authorList>
    </citation>
    <scope>SEQUENCE REVISION</scope>
</reference>
<reference key="3">
    <citation type="journal article" date="2004" name="Nat. Genet.">
        <title>Complete sequencing and characterization of 21,243 full-length human cDNAs.</title>
        <authorList>
            <person name="Ota T."/>
            <person name="Suzuki Y."/>
            <person name="Nishikawa T."/>
            <person name="Otsuki T."/>
            <person name="Sugiyama T."/>
            <person name="Irie R."/>
            <person name="Wakamatsu A."/>
            <person name="Hayashi K."/>
            <person name="Sato H."/>
            <person name="Nagai K."/>
            <person name="Kimura K."/>
            <person name="Makita H."/>
            <person name="Sekine M."/>
            <person name="Obayashi M."/>
            <person name="Nishi T."/>
            <person name="Shibahara T."/>
            <person name="Tanaka T."/>
            <person name="Ishii S."/>
            <person name="Yamamoto J."/>
            <person name="Saito K."/>
            <person name="Kawai Y."/>
            <person name="Isono Y."/>
            <person name="Nakamura Y."/>
            <person name="Nagahari K."/>
            <person name="Murakami K."/>
            <person name="Yasuda T."/>
            <person name="Iwayanagi T."/>
            <person name="Wagatsuma M."/>
            <person name="Shiratori A."/>
            <person name="Sudo H."/>
            <person name="Hosoiri T."/>
            <person name="Kaku Y."/>
            <person name="Kodaira H."/>
            <person name="Kondo H."/>
            <person name="Sugawara M."/>
            <person name="Takahashi M."/>
            <person name="Kanda K."/>
            <person name="Yokoi T."/>
            <person name="Furuya T."/>
            <person name="Kikkawa E."/>
            <person name="Omura Y."/>
            <person name="Abe K."/>
            <person name="Kamihara K."/>
            <person name="Katsuta N."/>
            <person name="Sato K."/>
            <person name="Tanikawa M."/>
            <person name="Yamazaki M."/>
            <person name="Ninomiya K."/>
            <person name="Ishibashi T."/>
            <person name="Yamashita H."/>
            <person name="Murakawa K."/>
            <person name="Fujimori K."/>
            <person name="Tanai H."/>
            <person name="Kimata M."/>
            <person name="Watanabe M."/>
            <person name="Hiraoka S."/>
            <person name="Chiba Y."/>
            <person name="Ishida S."/>
            <person name="Ono Y."/>
            <person name="Takiguchi S."/>
            <person name="Watanabe S."/>
            <person name="Yosida M."/>
            <person name="Hotuta T."/>
            <person name="Kusano J."/>
            <person name="Kanehori K."/>
            <person name="Takahashi-Fujii A."/>
            <person name="Hara H."/>
            <person name="Tanase T.-O."/>
            <person name="Nomura Y."/>
            <person name="Togiya S."/>
            <person name="Komai F."/>
            <person name="Hara R."/>
            <person name="Takeuchi K."/>
            <person name="Arita M."/>
            <person name="Imose N."/>
            <person name="Musashino K."/>
            <person name="Yuuki H."/>
            <person name="Oshima A."/>
            <person name="Sasaki N."/>
            <person name="Aotsuka S."/>
            <person name="Yoshikawa Y."/>
            <person name="Matsunawa H."/>
            <person name="Ichihara T."/>
            <person name="Shiohata N."/>
            <person name="Sano S."/>
            <person name="Moriya S."/>
            <person name="Momiyama H."/>
            <person name="Satoh N."/>
            <person name="Takami S."/>
            <person name="Terashima Y."/>
            <person name="Suzuki O."/>
            <person name="Nakagawa S."/>
            <person name="Senoh A."/>
            <person name="Mizoguchi H."/>
            <person name="Goto Y."/>
            <person name="Shimizu F."/>
            <person name="Wakebe H."/>
            <person name="Hishigaki H."/>
            <person name="Watanabe T."/>
            <person name="Sugiyama A."/>
            <person name="Takemoto M."/>
            <person name="Kawakami B."/>
            <person name="Yamazaki M."/>
            <person name="Watanabe K."/>
            <person name="Kumagai A."/>
            <person name="Itakura S."/>
            <person name="Fukuzumi Y."/>
            <person name="Fujimori Y."/>
            <person name="Komiyama M."/>
            <person name="Tashiro H."/>
            <person name="Tanigami A."/>
            <person name="Fujiwara T."/>
            <person name="Ono T."/>
            <person name="Yamada K."/>
            <person name="Fujii Y."/>
            <person name="Ozaki K."/>
            <person name="Hirao M."/>
            <person name="Ohmori Y."/>
            <person name="Kawabata A."/>
            <person name="Hikiji T."/>
            <person name="Kobatake N."/>
            <person name="Inagaki H."/>
            <person name="Ikema Y."/>
            <person name="Okamoto S."/>
            <person name="Okitani R."/>
            <person name="Kawakami T."/>
            <person name="Noguchi S."/>
            <person name="Itoh T."/>
            <person name="Shigeta K."/>
            <person name="Senba T."/>
            <person name="Matsumura K."/>
            <person name="Nakajima Y."/>
            <person name="Mizuno T."/>
            <person name="Morinaga M."/>
            <person name="Sasaki M."/>
            <person name="Togashi T."/>
            <person name="Oyama M."/>
            <person name="Hata H."/>
            <person name="Watanabe M."/>
            <person name="Komatsu T."/>
            <person name="Mizushima-Sugano J."/>
            <person name="Satoh T."/>
            <person name="Shirai Y."/>
            <person name="Takahashi Y."/>
            <person name="Nakagawa K."/>
            <person name="Okumura K."/>
            <person name="Nagase T."/>
            <person name="Nomura N."/>
            <person name="Kikuchi H."/>
            <person name="Masuho Y."/>
            <person name="Yamashita R."/>
            <person name="Nakai K."/>
            <person name="Yada T."/>
            <person name="Nakamura Y."/>
            <person name="Ohara O."/>
            <person name="Isogai T."/>
            <person name="Sugano S."/>
        </authorList>
    </citation>
    <scope>NUCLEOTIDE SEQUENCE [LARGE SCALE MRNA] (ISOFORM 2)</scope>
    <scope>NUCLEOTIDE SEQUENCE [LARGE SCALE MRNA] OF 1-2566 (ISOFORM 4)</scope>
    <scope>NUCLEOTIDE SEQUENCE [LARGE SCALE MRNA] OF 2152-2601 (ISOFORM 3)</scope>
    <source>
        <tissue>Cerebellum</tissue>
        <tissue>Chondrocyte</tissue>
        <tissue>Uterus</tissue>
    </source>
</reference>
<reference key="4">
    <citation type="journal article" date="2006" name="Nature">
        <title>Human chromosome 11 DNA sequence and analysis including novel gene identification.</title>
        <authorList>
            <person name="Taylor T.D."/>
            <person name="Noguchi H."/>
            <person name="Totoki Y."/>
            <person name="Toyoda A."/>
            <person name="Kuroki Y."/>
            <person name="Dewar K."/>
            <person name="Lloyd C."/>
            <person name="Itoh T."/>
            <person name="Takeda T."/>
            <person name="Kim D.-W."/>
            <person name="She X."/>
            <person name="Barlow K.F."/>
            <person name="Bloom T."/>
            <person name="Bruford E."/>
            <person name="Chang J.L."/>
            <person name="Cuomo C.A."/>
            <person name="Eichler E."/>
            <person name="FitzGerald M.G."/>
            <person name="Jaffe D.B."/>
            <person name="LaButti K."/>
            <person name="Nicol R."/>
            <person name="Park H.-S."/>
            <person name="Seaman C."/>
            <person name="Sougnez C."/>
            <person name="Yang X."/>
            <person name="Zimmer A.R."/>
            <person name="Zody M.C."/>
            <person name="Birren B.W."/>
            <person name="Nusbaum C."/>
            <person name="Fujiyama A."/>
            <person name="Hattori M."/>
            <person name="Rogers J."/>
            <person name="Lander E.S."/>
            <person name="Sakaki Y."/>
        </authorList>
    </citation>
    <scope>NUCLEOTIDE SEQUENCE [LARGE SCALE GENOMIC DNA]</scope>
</reference>
<reference key="5">
    <citation type="journal article" date="2010" name="Mol. Biol. Cell">
        <title>Centriolar association of ALMS1 and likely centrosomal functions of the ALMS motif-containing proteins C10orf90 and KIAA1731.</title>
        <authorList>
            <person name="Knorz V.J."/>
            <person name="Spalluto C."/>
            <person name="Lessard M."/>
            <person name="Purvis T.L."/>
            <person name="Adigun F.F."/>
            <person name="Collin G.B."/>
            <person name="Hanley N.A."/>
            <person name="Wilson D.I."/>
            <person name="Hearn T."/>
        </authorList>
    </citation>
    <scope>SUBCELLULAR LOCATION</scope>
    <scope>POSSIBLE FUNCTION</scope>
</reference>
<reference key="6">
    <citation type="journal article" date="2013" name="J. Proteome Res.">
        <title>Toward a comprehensive characterization of a human cancer cell phosphoproteome.</title>
        <authorList>
            <person name="Zhou H."/>
            <person name="Di Palma S."/>
            <person name="Preisinger C."/>
            <person name="Peng M."/>
            <person name="Polat A.N."/>
            <person name="Heck A.J."/>
            <person name="Mohammed S."/>
        </authorList>
    </citation>
    <scope>PHOSPHORYLATION [LARGE SCALE ANALYSIS] AT SER-14; SER-654; SER-938; SER-1637 AND THR-2473</scope>
    <scope>IDENTIFICATION BY MASS SPECTROMETRY [LARGE SCALE ANALYSIS]</scope>
    <source>
        <tissue>Cervix carcinoma</tissue>
        <tissue>Erythroleukemia</tissue>
    </source>
</reference>
<reference key="7">
    <citation type="journal article" date="2014" name="Cell Rep.">
        <title>Stabilization of cartwheel-less centrioles for duplication requires CEP295-mediated centriole-to-centrosome conversion.</title>
        <authorList>
            <person name="Izquierdo D."/>
            <person name="Wang W.J."/>
            <person name="Uryu K."/>
            <person name="Tsou M.F."/>
        </authorList>
    </citation>
    <scope>FUNCTION</scope>
    <scope>SUBCELLULAR LOCATION</scope>
</reference>
<reference key="8">
    <citation type="journal article" date="2016" name="J. Cell Sci.">
        <title>CEP295 interacts with microtubules and is required for centriole elongation.</title>
        <authorList>
            <person name="Chang C.W."/>
            <person name="Hsu W.B."/>
            <person name="Tsai J.J."/>
            <person name="Tang C.J."/>
            <person name="Tang T.K."/>
        </authorList>
    </citation>
    <scope>FUNCTION</scope>
    <scope>INTERACTION WITH MICROTUBULES</scope>
    <scope>SUBCELLULAR LOCATION</scope>
    <scope>DOMAIN</scope>
</reference>
<reference key="9">
    <citation type="journal article" date="2020" name="Nat. Commun.">
        <title>CEP44 ensures the formation of bona fide centriole wall, a requirement for the centriole-to-centrosome conversion.</title>
        <authorList>
            <person name="Atorino E.S."/>
            <person name="Hata S."/>
            <person name="Funaya C."/>
            <person name="Neuner A."/>
            <person name="Schiebel E."/>
        </authorList>
    </citation>
    <scope>FUNCTION</scope>
    <scope>SUBCELLULAR LOCATION</scope>
</reference>
<reference key="10">
    <citation type="journal article" date="2024" name="EBioMedicine">
        <title>Bi-allelic variants in CEP295 cause Seckel-like syndrome presenting with primary microcephaly, developmental delay, intellectual disability, short stature, craniofacial and digital abnormalities.</title>
        <authorList>
            <person name="Li N."/>
            <person name="Xu Y."/>
            <person name="Chen H."/>
            <person name="Lin J."/>
            <person name="Al Abdi L."/>
            <person name="Bekheirnia M.R."/>
            <person name="Li G."/>
            <person name="Gofin Y."/>
            <person name="Bekheirnia N."/>
            <person name="Faqeih E."/>
            <person name="Chen L."/>
            <person name="Chang G."/>
            <person name="Tang J."/>
            <person name="Yao R."/>
            <person name="Yu T."/>
            <person name="Wang X."/>
            <person name="Fu W."/>
            <person name="Fu Q."/>
            <person name="Shen Y."/>
            <person name="Alkuraya F.S."/>
            <person name="Machol K."/>
            <person name="Wang J."/>
        </authorList>
    </citation>
    <scope>VARIANTS SCKL11 544-GLN--CYS-2601 DEL; LEU-562 AND 1520-ARG--CYS-2601 DEL</scope>
    <scope>INVOLVEMENT IN SCKL11</scope>
    <scope>CHARACTERIZATION OF VARIANT SCKL11 LEU-562</scope>
    <scope>FUNCTION</scope>
</reference>
<feature type="chain" id="PRO_0000324595" description="Centrosomal protein of 295 kDa">
    <location>
        <begin position="1"/>
        <end position="2601"/>
    </location>
</feature>
<feature type="region of interest" description="Necessary for centriole targeting and microtubule association" evidence="6">
    <location>
        <begin position="1"/>
        <end position="560"/>
    </location>
</feature>
<feature type="region of interest" description="Disordered" evidence="2">
    <location>
        <begin position="1008"/>
        <end position="1029"/>
    </location>
</feature>
<feature type="region of interest" description="Disordered" evidence="2">
    <location>
        <begin position="1558"/>
        <end position="1580"/>
    </location>
</feature>
<feature type="region of interest" description="Disordered" evidence="2">
    <location>
        <begin position="1795"/>
        <end position="1834"/>
    </location>
</feature>
<feature type="region of interest" description="Disordered" evidence="2">
    <location>
        <begin position="1979"/>
        <end position="2004"/>
    </location>
</feature>
<feature type="region of interest" description="Disordered" evidence="2">
    <location>
        <begin position="2085"/>
        <end position="2117"/>
    </location>
</feature>
<feature type="region of interest" description="ALMS motif">
    <location>
        <begin position="2478"/>
        <end position="2601"/>
    </location>
</feature>
<feature type="coiled-coil region" evidence="1">
    <location>
        <begin position="207"/>
        <end position="273"/>
    </location>
</feature>
<feature type="coiled-coil region" evidence="1">
    <location>
        <begin position="500"/>
        <end position="552"/>
    </location>
</feature>
<feature type="coiled-coil region" evidence="1">
    <location>
        <begin position="1053"/>
        <end position="1082"/>
    </location>
</feature>
<feature type="coiled-coil region" evidence="1">
    <location>
        <begin position="1498"/>
        <end position="1544"/>
    </location>
</feature>
<feature type="coiled-coil region" evidence="1">
    <location>
        <begin position="1728"/>
        <end position="1758"/>
    </location>
</feature>
<feature type="coiled-coil region" evidence="1">
    <location>
        <begin position="2556"/>
        <end position="2581"/>
    </location>
</feature>
<feature type="compositionally biased region" description="Basic and acidic residues" evidence="2">
    <location>
        <begin position="1013"/>
        <end position="1027"/>
    </location>
</feature>
<feature type="compositionally biased region" description="Polar residues" evidence="2">
    <location>
        <begin position="1565"/>
        <end position="1577"/>
    </location>
</feature>
<feature type="compositionally biased region" description="Basic and acidic residues" evidence="2">
    <location>
        <begin position="1795"/>
        <end position="1827"/>
    </location>
</feature>
<feature type="compositionally biased region" description="Basic and acidic residues" evidence="2">
    <location>
        <begin position="1985"/>
        <end position="2003"/>
    </location>
</feature>
<feature type="compositionally biased region" description="Basic and acidic residues" evidence="2">
    <location>
        <begin position="2100"/>
        <end position="2112"/>
    </location>
</feature>
<feature type="modified residue" description="Phosphoserine" evidence="12">
    <location>
        <position position="14"/>
    </location>
</feature>
<feature type="modified residue" description="Phosphoserine" evidence="12">
    <location>
        <position position="654"/>
    </location>
</feature>
<feature type="modified residue" description="Phosphoserine" evidence="12">
    <location>
        <position position="938"/>
    </location>
</feature>
<feature type="modified residue" description="Phosphoserine" evidence="12">
    <location>
        <position position="1637"/>
    </location>
</feature>
<feature type="modified residue" description="Phosphothreonine" evidence="12">
    <location>
        <position position="2473"/>
    </location>
</feature>
<feature type="splice variant" id="VSP_032288" description="In isoform 4." evidence="9">
    <location>
        <begin position="1"/>
        <end position="1988"/>
    </location>
</feature>
<feature type="splice variant" id="VSP_032289" description="In isoform 2." evidence="9">
    <location>
        <begin position="1"/>
        <end position="1772"/>
    </location>
</feature>
<feature type="splice variant" id="VSP_032290" description="In isoform 2." evidence="9">
    <location>
        <begin position="1818"/>
        <end position="1865"/>
    </location>
</feature>
<feature type="splice variant" id="VSP_032291" description="In isoform 3 and isoform 4." evidence="9">
    <original>T</original>
    <variation>TA</variation>
    <location>
        <position position="2466"/>
    </location>
</feature>
<feature type="sequence variant" id="VAR_059337" description="In dbSNP:rs7128850.">
    <original>Q</original>
    <variation>K</variation>
    <location>
        <position position="80"/>
    </location>
</feature>
<feature type="sequence variant" id="VAR_059338" description="In dbSNP:rs10831088." evidence="3">
    <original>R</original>
    <variation>Q</variation>
    <location>
        <position position="208"/>
    </location>
</feature>
<feature type="sequence variant" id="VAR_059339" description="In dbSNP:rs4753495." evidence="3">
    <original>A</original>
    <variation>E</variation>
    <location>
        <position position="499"/>
    </location>
</feature>
<feature type="sequence variant" id="VAR_089474" description="In SCKL11; likely pathogenic." evidence="8">
    <location>
        <begin position="544"/>
        <end position="2601"/>
    </location>
</feature>
<feature type="sequence variant" id="VAR_089475" description="In SCKL11; likely pathogenic; loss of function in centriole replication and ciliogenesis; the variant is unable to rescue centriole and ciliary defects in patient-derived cells; dbSNP:rs1467671170." evidence="8">
    <original>P</original>
    <variation>L</variation>
    <location>
        <position position="562"/>
    </location>
</feature>
<feature type="sequence variant" id="VAR_059340" description="In dbSNP:rs3802771.">
    <original>E</original>
    <variation>K</variation>
    <location>
        <position position="1026"/>
    </location>
</feature>
<feature type="sequence variant" id="VAR_059341" description="In dbSNP:rs2298707.">
    <original>A</original>
    <variation>G</variation>
    <location>
        <position position="1270"/>
    </location>
</feature>
<feature type="sequence variant" id="VAR_059342" description="In dbSNP:rs3802773.">
    <original>G</original>
    <variation>E</variation>
    <location>
        <position position="1441"/>
    </location>
</feature>
<feature type="sequence variant" id="VAR_059343" description="In dbSNP:rs3802774.">
    <original>L</original>
    <variation>R</variation>
    <location>
        <position position="1459"/>
    </location>
</feature>
<feature type="sequence variant" id="VAR_089476" description="In SCKL11; likely pathogenic." evidence="8">
    <location>
        <begin position="1520"/>
        <end position="2601"/>
    </location>
</feature>
<feature type="sequence conflict" description="In Ref. 1; BAB21822." evidence="10" ref="1">
    <original>Q</original>
    <variation>H</variation>
    <location>
        <position position="511"/>
    </location>
</feature>
<feature type="sequence conflict" description="In Ref. 3; BAC04502." evidence="10" ref="3">
    <original>F</original>
    <variation>L</variation>
    <location>
        <position position="1888"/>
    </location>
</feature>
<feature type="sequence conflict" description="In Ref. 3; BAC05264." evidence="10" ref="3">
    <original>V</original>
    <variation>L</variation>
    <location>
        <position position="2026"/>
    </location>
</feature>
<feature type="sequence conflict" description="In Ref. 3; BAC05264." evidence="10" ref="3">
    <original>P</original>
    <variation>S</variation>
    <location>
        <position position="2081"/>
    </location>
</feature>
<feature type="sequence conflict" description="In Ref. 3; BAC05264." evidence="10" ref="3">
    <original>S</original>
    <variation>G</variation>
    <location>
        <position position="2278"/>
    </location>
</feature>
<feature type="sequence conflict" description="In Ref. 3; BAC05264." evidence="10" ref="3">
    <original>Q</original>
    <variation>R</variation>
    <location>
        <position position="2294"/>
    </location>
</feature>
<feature type="sequence conflict" description="In Ref. 3; BAB71582/BAC04502/BAC04638/BAC05264." evidence="10" ref="3">
    <original>E</original>
    <variation>V</variation>
    <location>
        <position position="2437"/>
    </location>
</feature>
<organism>
    <name type="scientific">Homo sapiens</name>
    <name type="common">Human</name>
    <dbReference type="NCBI Taxonomy" id="9606"/>
    <lineage>
        <taxon>Eukaryota</taxon>
        <taxon>Metazoa</taxon>
        <taxon>Chordata</taxon>
        <taxon>Craniata</taxon>
        <taxon>Vertebrata</taxon>
        <taxon>Euteleostomi</taxon>
        <taxon>Mammalia</taxon>
        <taxon>Eutheria</taxon>
        <taxon>Euarchontoglires</taxon>
        <taxon>Primates</taxon>
        <taxon>Haplorrhini</taxon>
        <taxon>Catarrhini</taxon>
        <taxon>Hominidae</taxon>
        <taxon>Homo</taxon>
    </lineage>
</organism>
<evidence type="ECO:0000255" key="1"/>
<evidence type="ECO:0000256" key="2">
    <source>
        <dbReference type="SAM" id="MobiDB-lite"/>
    </source>
</evidence>
<evidence type="ECO:0000269" key="3">
    <source>
    </source>
</evidence>
<evidence type="ECO:0000269" key="4">
    <source>
    </source>
</evidence>
<evidence type="ECO:0000269" key="5">
    <source>
    </source>
</evidence>
<evidence type="ECO:0000269" key="6">
    <source>
    </source>
</evidence>
<evidence type="ECO:0000269" key="7">
    <source>
    </source>
</evidence>
<evidence type="ECO:0000269" key="8">
    <source>
    </source>
</evidence>
<evidence type="ECO:0000303" key="9">
    <source>
    </source>
</evidence>
<evidence type="ECO:0000305" key="10"/>
<evidence type="ECO:0000312" key="11">
    <source>
        <dbReference type="HGNC" id="HGNC:29366"/>
    </source>
</evidence>
<evidence type="ECO:0007744" key="12">
    <source>
    </source>
</evidence>
<sequence>MKRKVVNTHKLRLSPNEEAFILKEDYERRRKLRLLQVREQERDIALQIREDIKQRRNQQFTRLAEELRAEWEESQTQKIQNLEKLYLASLRSMGEGHRQAKENEPDLDALAQRAAERKRKADLRHKEALKVQKNQKEILLKQKTWHIKARKEALLVEKERSAKITSLPPPPPTLFENIEVKRISAVKTNSSTYHHLHTFVNRETDTKRPDARLAAEEEAKRLEELQKQAAQERMERFEKAHVRGFQAMKKIHLAQNQEKLMKELKQLQQEDLARRRQTVAQMPPQLVELPYKRSEMKEDWQRELEFAFEDMYNADRKVKGNLILHLEPEPLPTVTNQIQDEELDLSMEQENLGAAEDLPVTEAEICSSETDVPLVMKTQQIPSKVLFKKLLNKIRSQKSLWTIKSMSEDESEMITTVSEIESKAPTVESGTIASKERTLSSGQEQVVESDTLTIESGPLASEDKPLSCGTNSGKEQEINETLPITTVAQSSVLLHPQEAAARIRMSARQKQIMEIEEQKQKQLELLEQIEQQKLRLETDCFRAQLEEEKRKKTQPTGVGIAPASCPVISDEDSHRQMIRNYQHQLLQQNRLHRQSVETARKQLLEYQTMLKGRCPSVSAPSLITDSVISVPSWKSERPTAISEHWDQGQRLKLSPNKYQPIQPIQTSKLEQDHFQVARQNHFPQRQVETTETLRASDILTNQALESQEHLRQFSQTETQQRDYKLVPKDSETLSRALSHDRQLISQDARKISETFGATTFQSLESQQLFSENSENISYHLTEPSSFVPLVPQHSFSSLPVKVESGKIQEPFSAMSKSTVSTSHSIISQMHDRPLLPSENITAQQGNMKALQEQLDLQKKVLQATQEAQEQLLLCKQKEVEQQTGLSVFLPLVTPDSSALLPSAKADLGRIQESSPTKNNIAVSSDHHVISQLQDKRLSLSQPILSQQNNFKFLQEQLNIQKDSLQARREAQEVLYVHKQSELDRRVCSEQAEPSFPFQVAQHTFTSLPSADTKSGKIQEQHSSKSEKGLVSCQSDIPISQDGSLSFLQQFLPLHDSLKLLQEQLTKQRDTLQARHEAQVELLLHRQRDLGDSKSGLVSSSSSPVVVQHSVASQASAKAEPRRIQELYLSEKENVGPSCHLIIPTFQDKSLSFPQHSLAQQENLTILQEQSQIQRVILGAKEGTQEFVHTESELEKRISSEQTGTSSSLSQVDESERFQECISIKSDSTIPLSHPKIPRCQERLLRVSQHMLPLQDNLEEHQAWLDTEKEAFHFSQKTQENTSSEQTGSSSFIPQLVQLSFTSLASAESGTILEPLFTESESKIFSSHLQIPQLQDRLLRISQLIQPQQDNLKALQEQLATQREAIILARQEAREELLLHQSEWEGRISPEQVDTSSLPLVPQHSFASLPLNESERNQEPCSINSDNIVSSGHSEIPTLPDGLLGLSHLVLPQQDNLIALEEHLHAQTDFLPSIEKTQKELVLSKPCKFEEKVSSEHFIQSHHGDLQALQQQLDTQKKAIRSIQEVQEELLLQRLSELEKRVSSEQVCSSSFVSQVPVADSERTQKSFPTKSNDTLPSSHREIPRLQDRLLSLSKPILPQQDNMTAQLDAQREVMYSYEKPQEELSLNKQRKLNKSESAEHTIPSLFLPKETEHSFIPLPFAEAKPKSTCELYSSQNEHAAPPSNPVIPGFQDRLLSFSQSVLTQQDNLGLQKQLDLQREVLHYSQKAQEKLLVQRQTALQQQIQKHEETLKDFFKDSQISKPTVENDLKTQKMGQLRDWFPNTQDLAGNDQENIRHADRNNSDDNHLASEDTSAKQSGEHLEKDLGRRSSKPPVAKVKCGLDLNQHELSAIQEVESPAIGRTSILGKPGIYEDRDPLRVSISREQSFFGSPLAHDPFSCLQLVGQENVCGDDYDEAVKLKESVVENHAVLSYAVEEEHAYLGPTVKPDDKAKTLSYEPLSSATVSTGSLLSYENTDLSLTDPESFSEHMDDSKQESTTSKEEETNIISSIVPSTQDIYQRQNSSDVHKSLLPAVDETTCGHTHFQQMIDKYINEANLIPEKTDLQELEHIFPNLHHQLFKPLEPHPDFDLSSSSSGISPDNRDFYQRSDSSSESHCATGLSKSTVYFTALRRTSMHSSLNTSPNQQPDTNLAHVGAHSFATENIIGGSEQCFEQLQPEYSSQEESQHADLPSIFSIEARDSSQGMKNQNYPSEEHTEILQNKKKIVHFQLSIGNLSSVYSSSDEANVFDQLNVQHSTPCGSNSSECSTKHQLESRKESMGFEELSKRGVVTMLQSQGLIEDNKNETCRVLDINPQVEETDSRLCVRTVEMGTSIQAPYSLTTQNEKYFENSAETDIPKITKKLSQLGESELFASSGSFSLQSSIPVWETETGHGIMEEPELTLISTTDTSIAEMDFANLTLEEKSENEAKCFFQVSEFLPLVSATEASDYPAVSELSIEKPRTASTETPRRLTPVPGSLQEAFIKRKKSFMERSHQRQKEIRNKIHVSENSQIKTVKEKPSISSSVSRLKGVNKVRASFPEDRKTTQALRHQRGLRLYNQLAEVKQQKEEKTKQEAYAQNRARAKEFHKKTLEKLRAKNTC</sequence>
<comment type="function">
    <text evidence="4 5 6 7 8">Centriole-enriched microtubule-binding protein involved in centriole biogenesis (PubMed:20844083, PubMed:25131205, PubMed:27185865, PubMed:38154379). Essential for the generation of the distal portion of new-born centrioles in a CPAP- and CEP120-mediated elongation dependent manner during the cell cycle S/G2 phase after formation of the initiating cartwheel structure (PubMed:27185865). Required for the recruitment of centriolar proteins, such as POC1B, POC5 and CEP135, into the distal portion of centrioles (PubMed:27185865). Also required for centriole-to-centrosome conversion during mitotic progression, but is dispensable for cartwheel removal or centriole disengagement (PubMed:25131205). Binds to and stabilizes centriolar microtubule (PubMed:27185865). May be involved in ciliogenesis (PubMed:38154379).</text>
</comment>
<comment type="subunit">
    <text evidence="6">Interacts (via ALMS motif) with microtubules; this interaction is direct.</text>
</comment>
<comment type="subcellular location">
    <subcellularLocation>
        <location evidence="5 6 7">Cytoplasm</location>
        <location evidence="5 6 7">Cytoskeleton</location>
        <location evidence="5 6 7">Microtubule organizing center</location>
        <location evidence="5 6 7">Centrosome</location>
        <location evidence="5 6 7">Centriole</location>
    </subcellularLocation>
    <subcellularLocation>
        <location evidence="4 6">Cytoplasm</location>
        <location evidence="4 6">Cytoskeleton</location>
        <location evidence="4 6">Microtubule organizing center</location>
        <location evidence="4 6">Centrosome</location>
    </subcellularLocation>
    <subcellularLocation>
        <location evidence="6">Cytoplasm</location>
        <location evidence="6">Cytoskeleton</location>
        <location evidence="6">Spindle</location>
    </subcellularLocation>
    <subcellularLocation>
        <location evidence="6">Cytoplasm</location>
        <location evidence="6">Cytoskeleton</location>
    </subcellularLocation>
    <text evidence="5 6 7">Associates with both of the converted centrioles during G1 but becomes more enriched at the newly formed daughter (or unconverted) centrioles during S, G2, and early M phases (PubMed:25131205, PubMed:32060285). In early S phase, localized at the procentriolar microtubule wall and enriched at the proximal ends of the centrioles in CPAP- and CEP135-dependent manner (PubMed:27185865). Colocalizes with SASS6 and CEP250 proteins (PubMed:25131205). Colocalizes with CEP135 and CEP192 at the centrosomes (PubMed:27185865). Associates with interphase microtubules and mitotic spindles (PubMed:27185865). Colocalizes with centriolar acetylated tubulin (PubMed:25131205).</text>
</comment>
<comment type="alternative products">
    <event type="alternative splicing"/>
    <isoform>
        <id>Q9C0D2-1</id>
        <name>1</name>
        <sequence type="displayed"/>
    </isoform>
    <isoform>
        <id>Q9C0D2-2</id>
        <name>2</name>
        <sequence type="described" ref="VSP_032289 VSP_032290"/>
    </isoform>
    <isoform>
        <id>Q9C0D2-3</id>
        <name>3</name>
        <sequence type="described" ref="VSP_032291"/>
    </isoform>
    <isoform>
        <id>Q9C0D2-4</id>
        <name>4</name>
        <sequence type="described" ref="VSP_032288 VSP_032291"/>
    </isoform>
</comment>
<comment type="domain">
    <text evidence="6">The N-terminal and the ALMS motif-containing C-terminal regions are essential for CEP295-mediated centriole elongation.</text>
</comment>
<comment type="disease" evidence="8">
    <disease id="DI-06869">
        <name>Seckel syndrome 11</name>
        <acronym>SCKL11</acronym>
        <description>A form of Seckel syndrome, a rare autosomal recessive disorder characterized by proportionate dwarfism of prenatal onset associated with low birth weight, growth retardation, severe microcephaly with a bird-headed like appearance, and intellectual disability.</description>
        <dbReference type="MIM" id="620767"/>
    </disease>
    <text>The disease is caused by variants affecting the gene represented in this entry.</text>
</comment>
<comment type="sequence caution" evidence="10">
    <conflict type="erroneous initiation">
        <sequence resource="EMBL-CDS" id="BAB21822"/>
    </conflict>
    <text>Extended N-terminus.</text>
</comment>
<comment type="sequence caution" evidence="10">
    <conflict type="frameshift">
        <sequence resource="EMBL-CDS" id="BAB21822"/>
    </conflict>
</comment>
<comment type="sequence caution" evidence="10">
    <conflict type="erroneous initiation">
        <sequence resource="EMBL-CDS" id="BAB71582"/>
    </conflict>
    <text>Truncated N-terminus.</text>
</comment>
<comment type="sequence caution" evidence="10">
    <conflict type="erroneous initiation">
        <sequence resource="EMBL-CDS" id="BAC04638"/>
    </conflict>
    <text>Truncated N-terminus.</text>
</comment>
<name>CE295_HUMAN</name>
<keyword id="KW-0025">Alternative splicing</keyword>
<keyword id="KW-0970">Cilium biogenesis/degradation</keyword>
<keyword id="KW-0175">Coiled coil</keyword>
<keyword id="KW-0963">Cytoplasm</keyword>
<keyword id="KW-0206">Cytoskeleton</keyword>
<keyword id="KW-0225">Disease variant</keyword>
<keyword id="KW-0242">Dwarfism</keyword>
<keyword id="KW-0991">Intellectual disability</keyword>
<keyword id="KW-0597">Phosphoprotein</keyword>
<keyword id="KW-1267">Proteomics identification</keyword>
<keyword id="KW-1185">Reference proteome</keyword>
<proteinExistence type="evidence at protein level"/>
<gene>
    <name evidence="11" type="primary">CEP295</name>
    <name evidence="11" type="synonym">KIAA1731</name>
</gene>